<keyword id="KW-1003">Cell membrane</keyword>
<keyword id="KW-0350">Heme biosynthesis</keyword>
<keyword id="KW-0408">Iron</keyword>
<keyword id="KW-0472">Membrane</keyword>
<keyword id="KW-0479">Metal-binding</keyword>
<keyword id="KW-0560">Oxidoreductase</keyword>
<keyword id="KW-0812">Transmembrane</keyword>
<keyword id="KW-1133">Transmembrane helix</keyword>
<feature type="chain" id="PRO_0000349065" description="Heme A synthase">
    <location>
        <begin position="1"/>
        <end position="391"/>
    </location>
</feature>
<feature type="transmembrane region" description="Helical" evidence="1">
    <location>
        <begin position="37"/>
        <end position="57"/>
    </location>
</feature>
<feature type="transmembrane region" description="Helical" evidence="1">
    <location>
        <begin position="121"/>
        <end position="141"/>
    </location>
</feature>
<feature type="transmembrane region" description="Helical" evidence="1">
    <location>
        <begin position="152"/>
        <end position="172"/>
    </location>
</feature>
<feature type="transmembrane region" description="Helical" evidence="1">
    <location>
        <begin position="186"/>
        <end position="206"/>
    </location>
</feature>
<feature type="transmembrane region" description="Helical" evidence="1">
    <location>
        <begin position="229"/>
        <end position="249"/>
    </location>
</feature>
<feature type="transmembrane region" description="Helical" evidence="1">
    <location>
        <begin position="298"/>
        <end position="318"/>
    </location>
</feature>
<feature type="transmembrane region" description="Helical" evidence="1">
    <location>
        <begin position="332"/>
        <end position="352"/>
    </location>
</feature>
<feature type="transmembrane region" description="Helical" evidence="1">
    <location>
        <begin position="354"/>
        <end position="374"/>
    </location>
</feature>
<feature type="binding site" description="axial binding residue" evidence="1">
    <location>
        <position position="300"/>
    </location>
    <ligand>
        <name>heme</name>
        <dbReference type="ChEBI" id="CHEBI:30413"/>
    </ligand>
    <ligandPart>
        <name>Fe</name>
        <dbReference type="ChEBI" id="CHEBI:18248"/>
    </ligandPart>
</feature>
<feature type="binding site" description="axial binding residue" evidence="1">
    <location>
        <position position="360"/>
    </location>
    <ligand>
        <name>heme</name>
        <dbReference type="ChEBI" id="CHEBI:30413"/>
    </ligand>
    <ligandPart>
        <name>Fe</name>
        <dbReference type="ChEBI" id="CHEBI:18248"/>
    </ligandPart>
</feature>
<name>CTAA_CERS1</name>
<dbReference type="EC" id="1.17.99.9" evidence="1"/>
<dbReference type="EMBL" id="CP000578">
    <property type="protein sequence ID" value="ABN78616.1"/>
    <property type="molecule type" value="Genomic_DNA"/>
</dbReference>
<dbReference type="RefSeq" id="WP_011842422.1">
    <property type="nucleotide sequence ID" value="NC_009050.1"/>
</dbReference>
<dbReference type="SMR" id="A3PQK0"/>
<dbReference type="KEGG" id="rsh:Rsph17029_3524"/>
<dbReference type="HOGENOM" id="CLU_017627_0_0_5"/>
<dbReference type="UniPathway" id="UPA00269">
    <property type="reaction ID" value="UER00713"/>
</dbReference>
<dbReference type="GO" id="GO:0005886">
    <property type="term" value="C:plasma membrane"/>
    <property type="evidence" value="ECO:0007669"/>
    <property type="project" value="UniProtKB-SubCell"/>
</dbReference>
<dbReference type="GO" id="GO:0046872">
    <property type="term" value="F:metal ion binding"/>
    <property type="evidence" value="ECO:0007669"/>
    <property type="project" value="UniProtKB-KW"/>
</dbReference>
<dbReference type="GO" id="GO:0016653">
    <property type="term" value="F:oxidoreductase activity, acting on NAD(P)H, heme protein as acceptor"/>
    <property type="evidence" value="ECO:0007669"/>
    <property type="project" value="InterPro"/>
</dbReference>
<dbReference type="GO" id="GO:0006784">
    <property type="term" value="P:heme A biosynthetic process"/>
    <property type="evidence" value="ECO:0007669"/>
    <property type="project" value="UniProtKB-UniRule"/>
</dbReference>
<dbReference type="HAMAP" id="MF_01665">
    <property type="entry name" value="HemeA_synth_type2"/>
    <property type="match status" value="1"/>
</dbReference>
<dbReference type="InterPro" id="IPR003780">
    <property type="entry name" value="COX15/CtaA_fam"/>
</dbReference>
<dbReference type="InterPro" id="IPR054616">
    <property type="entry name" value="HemA_synt_rhodobact"/>
</dbReference>
<dbReference type="InterPro" id="IPR023754">
    <property type="entry name" value="HemeA_Synthase_type2"/>
</dbReference>
<dbReference type="NCBIfam" id="NF045570">
    <property type="entry name" value="HemSynCtaAAlphapr"/>
    <property type="match status" value="1"/>
</dbReference>
<dbReference type="PANTHER" id="PTHR23289">
    <property type="entry name" value="CYTOCHROME C OXIDASE ASSEMBLY PROTEIN COX15"/>
    <property type="match status" value="1"/>
</dbReference>
<dbReference type="PANTHER" id="PTHR23289:SF2">
    <property type="entry name" value="CYTOCHROME C OXIDASE ASSEMBLY PROTEIN COX15 HOMOLOG"/>
    <property type="match status" value="1"/>
</dbReference>
<dbReference type="Pfam" id="PF02628">
    <property type="entry name" value="COX15-CtaA"/>
    <property type="match status" value="1"/>
</dbReference>
<comment type="function">
    <text evidence="1">Catalyzes the conversion of heme O to heme A by two successive hydroxylations of the methyl group at C8. The first hydroxylation forms heme I, the second hydroxylation results in an unstable dihydroxymethyl group, which spontaneously dehydrates, resulting in the formyl group of heme A.</text>
</comment>
<comment type="catalytic activity">
    <reaction evidence="1">
        <text>Fe(II)-heme o + 2 A + H2O = Fe(II)-heme a + 2 AH2</text>
        <dbReference type="Rhea" id="RHEA:63388"/>
        <dbReference type="ChEBI" id="CHEBI:13193"/>
        <dbReference type="ChEBI" id="CHEBI:15377"/>
        <dbReference type="ChEBI" id="CHEBI:17499"/>
        <dbReference type="ChEBI" id="CHEBI:60530"/>
        <dbReference type="ChEBI" id="CHEBI:61715"/>
        <dbReference type="EC" id="1.17.99.9"/>
    </reaction>
    <physiologicalReaction direction="left-to-right" evidence="1">
        <dbReference type="Rhea" id="RHEA:63389"/>
    </physiologicalReaction>
</comment>
<comment type="cofactor">
    <cofactor evidence="1">
        <name>heme b</name>
        <dbReference type="ChEBI" id="CHEBI:60344"/>
    </cofactor>
</comment>
<comment type="pathway">
    <text evidence="1">Porphyrin-containing compound metabolism; heme A biosynthesis; heme A from heme O: step 1/1.</text>
</comment>
<comment type="subunit">
    <text evidence="1">Interacts with CtaB.</text>
</comment>
<comment type="subcellular location">
    <subcellularLocation>
        <location evidence="1">Cell membrane</location>
        <topology evidence="1">Multi-pass membrane protein</topology>
    </subcellularLocation>
</comment>
<comment type="similarity">
    <text evidence="1">Belongs to the COX15/CtaA family. Type 2 subfamily.</text>
</comment>
<accession>A3PQK0</accession>
<organism>
    <name type="scientific">Cereibacter sphaeroides (strain ATCC 17029 / ATH 2.4.9)</name>
    <name type="common">Rhodobacter sphaeroides</name>
    <dbReference type="NCBI Taxonomy" id="349101"/>
    <lineage>
        <taxon>Bacteria</taxon>
        <taxon>Pseudomonadati</taxon>
        <taxon>Pseudomonadota</taxon>
        <taxon>Alphaproteobacteria</taxon>
        <taxon>Rhodobacterales</taxon>
        <taxon>Paracoccaceae</taxon>
        <taxon>Cereibacter</taxon>
    </lineage>
</organism>
<evidence type="ECO:0000255" key="1">
    <source>
        <dbReference type="HAMAP-Rule" id="MF_01665"/>
    </source>
</evidence>
<protein>
    <recommendedName>
        <fullName evidence="1">Heme A synthase</fullName>
        <shortName evidence="1">HAS</shortName>
        <ecNumber evidence="1">1.17.99.9</ecNumber>
    </recommendedName>
    <alternativeName>
        <fullName evidence="1">Cytochrome aa3-controlling protein</fullName>
    </alternativeName>
</protein>
<gene>
    <name evidence="1" type="primary">ctaA</name>
    <name type="ordered locus">Rsph17029_3524</name>
</gene>
<sequence>MAVKKRSIFEEVGQGAKAPVPQGGSIDRGHGGARRGIRLWLMALFLLVMAMIVVGGLTRLTDSGLSITEWRPVTGAVPPLNEAQWAAEFDKYRESPQYRLMNAGMTLAEFQRIYWWEWGHRQLGRVIGLVWAVGFLGFLAARRIPRGWWPRLLALGALGGLQGGIGWWMVASGLEGDKVTVESTRLATHLGLAFIILGLIAWQALLLGRSESDLLQARRQKEGRLVTLTTVLIGVAFLQIVLGALVAGIDAGRGFPTWPDMNGTFLPADMFYVPGVETDWRNPAWWLGLLQNPGFVQFLHRMAGYTLAALGLIFWIFGRRSRHRATRGAFDLLAMALLAQILLGVGTVLSAAEWQVAIAHQVGAVVIWVLILHARHLALYPRVGSIRKGTL</sequence>
<reference key="1">
    <citation type="submission" date="2007-02" db="EMBL/GenBank/DDBJ databases">
        <title>Complete sequence of chromosome 2 of Rhodobacter sphaeroides ATCC 17029.</title>
        <authorList>
            <person name="Copeland A."/>
            <person name="Lucas S."/>
            <person name="Lapidus A."/>
            <person name="Barry K."/>
            <person name="Detter J.C."/>
            <person name="Glavina del Rio T."/>
            <person name="Hammon N."/>
            <person name="Israni S."/>
            <person name="Dalin E."/>
            <person name="Tice H."/>
            <person name="Pitluck S."/>
            <person name="Kiss H."/>
            <person name="Brettin T."/>
            <person name="Bruce D."/>
            <person name="Han C."/>
            <person name="Tapia R."/>
            <person name="Gilna P."/>
            <person name="Schmutz J."/>
            <person name="Larimer F."/>
            <person name="Land M."/>
            <person name="Hauser L."/>
            <person name="Kyrpides N."/>
            <person name="Mikhailova N."/>
            <person name="Richardson P."/>
            <person name="Mackenzie C."/>
            <person name="Choudhary M."/>
            <person name="Donohue T.J."/>
            <person name="Kaplan S."/>
        </authorList>
    </citation>
    <scope>NUCLEOTIDE SEQUENCE [LARGE SCALE GENOMIC DNA]</scope>
    <source>
        <strain>ATCC 17029 / ATH 2.4.9</strain>
    </source>
</reference>
<proteinExistence type="inferred from homology"/>